<dbReference type="EC" id="2.4.1.182" evidence="1"/>
<dbReference type="EMBL" id="CP001091">
    <property type="protein sequence ID" value="ACE60659.1"/>
    <property type="molecule type" value="Genomic_DNA"/>
</dbReference>
<dbReference type="RefSeq" id="WP_012478271.1">
    <property type="nucleotide sequence ID" value="NC_010939.1"/>
</dbReference>
<dbReference type="SMR" id="B3GZJ7"/>
<dbReference type="CAZy" id="GT19">
    <property type="family name" value="Glycosyltransferase Family 19"/>
</dbReference>
<dbReference type="KEGG" id="apa:APP7_0007"/>
<dbReference type="HOGENOM" id="CLU_036577_3_0_6"/>
<dbReference type="UniPathway" id="UPA00973"/>
<dbReference type="Proteomes" id="UP000001226">
    <property type="component" value="Chromosome"/>
</dbReference>
<dbReference type="GO" id="GO:0016020">
    <property type="term" value="C:membrane"/>
    <property type="evidence" value="ECO:0007669"/>
    <property type="project" value="GOC"/>
</dbReference>
<dbReference type="GO" id="GO:0008915">
    <property type="term" value="F:lipid-A-disaccharide synthase activity"/>
    <property type="evidence" value="ECO:0007669"/>
    <property type="project" value="UniProtKB-UniRule"/>
</dbReference>
<dbReference type="GO" id="GO:0005543">
    <property type="term" value="F:phospholipid binding"/>
    <property type="evidence" value="ECO:0007669"/>
    <property type="project" value="TreeGrafter"/>
</dbReference>
<dbReference type="GO" id="GO:0009245">
    <property type="term" value="P:lipid A biosynthetic process"/>
    <property type="evidence" value="ECO:0007669"/>
    <property type="project" value="UniProtKB-UniRule"/>
</dbReference>
<dbReference type="HAMAP" id="MF_00392">
    <property type="entry name" value="LpxB"/>
    <property type="match status" value="1"/>
</dbReference>
<dbReference type="InterPro" id="IPR003835">
    <property type="entry name" value="Glyco_trans_19"/>
</dbReference>
<dbReference type="NCBIfam" id="TIGR00215">
    <property type="entry name" value="lpxB"/>
    <property type="match status" value="1"/>
</dbReference>
<dbReference type="PANTHER" id="PTHR30372">
    <property type="entry name" value="LIPID-A-DISACCHARIDE SYNTHASE"/>
    <property type="match status" value="1"/>
</dbReference>
<dbReference type="PANTHER" id="PTHR30372:SF4">
    <property type="entry name" value="LIPID-A-DISACCHARIDE SYNTHASE, MITOCHONDRIAL-RELATED"/>
    <property type="match status" value="1"/>
</dbReference>
<dbReference type="Pfam" id="PF02684">
    <property type="entry name" value="LpxB"/>
    <property type="match status" value="1"/>
</dbReference>
<dbReference type="SUPFAM" id="SSF53756">
    <property type="entry name" value="UDP-Glycosyltransferase/glycogen phosphorylase"/>
    <property type="match status" value="1"/>
</dbReference>
<evidence type="ECO:0000255" key="1">
    <source>
        <dbReference type="HAMAP-Rule" id="MF_00392"/>
    </source>
</evidence>
<sequence length="393" mass="43880">MIKKEAPLIALVAGEISGDILGAGLINALKLHYPNARFIGVAGPRMIQAGCETLFDMEELAVMGLAEVVKHLPRLLKRRKQVIETMLAEKPDIFIGIDAPDFNLTVEEKLKASGIKTIHYVSPSVWAWRQNRVQKIARATNLVLAFLPFEKAFYDRFNVPCRFIGHTMADAIALKPNRSEACATLNLDETQRYLAILVGSRASEVRFLAEPFLKAAKILKQQYPDLQFLVPLVNDKRIAQFEQIKAQVAPELSVHILKGNARQAMIAAEASLLASGTAALEGMLCKSPMVVGYKMKAMTYWLAKRLVKTKYISLPNLLADEMLVPELIQDECNPENLAWYLGNYLADDADHRKQRNELKQRFTELHKLIQCDADAQAAQAVVDVLEANTSDQN</sequence>
<name>LPXB_ACTP7</name>
<protein>
    <recommendedName>
        <fullName evidence="1">Lipid-A-disaccharide synthase</fullName>
        <ecNumber evidence="1">2.4.1.182</ecNumber>
    </recommendedName>
</protein>
<reference key="1">
    <citation type="submission" date="2008-06" db="EMBL/GenBank/DDBJ databases">
        <title>Genome and proteome analysis of A. pleuropneumoniae serotype 7.</title>
        <authorList>
            <person name="Linke B."/>
            <person name="Buettner F."/>
            <person name="Martinez-Arias R."/>
            <person name="Goesmann A."/>
            <person name="Baltes N."/>
            <person name="Tegetmeyer H."/>
            <person name="Singh M."/>
            <person name="Gerlach G.F."/>
        </authorList>
    </citation>
    <scope>NUCLEOTIDE SEQUENCE [LARGE SCALE GENOMIC DNA]</scope>
    <source>
        <strain>AP76</strain>
    </source>
</reference>
<feature type="chain" id="PRO_1000191457" description="Lipid-A-disaccharide synthase">
    <location>
        <begin position="1"/>
        <end position="393"/>
    </location>
</feature>
<accession>B3GZJ7</accession>
<comment type="function">
    <text evidence="1">Condensation of UDP-2,3-diacylglucosamine and 2,3-diacylglucosamine-1-phosphate to form lipid A disaccharide, a precursor of lipid A, a phosphorylated glycolipid that anchors the lipopolysaccharide to the outer membrane of the cell.</text>
</comment>
<comment type="catalytic activity">
    <reaction evidence="1">
        <text>a lipid X + a UDP-2-N,3-O-bis[(3R)-3-hydroxyacyl]-alpha-D-glucosamine = a lipid A disaccharide + UDP + H(+)</text>
        <dbReference type="Rhea" id="RHEA:67828"/>
        <dbReference type="ChEBI" id="CHEBI:15378"/>
        <dbReference type="ChEBI" id="CHEBI:58223"/>
        <dbReference type="ChEBI" id="CHEBI:137748"/>
        <dbReference type="ChEBI" id="CHEBI:176338"/>
        <dbReference type="ChEBI" id="CHEBI:176343"/>
        <dbReference type="EC" id="2.4.1.182"/>
    </reaction>
</comment>
<comment type="pathway">
    <text evidence="1">Bacterial outer membrane biogenesis; LPS lipid A biosynthesis.</text>
</comment>
<comment type="similarity">
    <text evidence="1">Belongs to the LpxB family.</text>
</comment>
<keyword id="KW-0328">Glycosyltransferase</keyword>
<keyword id="KW-0441">Lipid A biosynthesis</keyword>
<keyword id="KW-0444">Lipid biosynthesis</keyword>
<keyword id="KW-0443">Lipid metabolism</keyword>
<keyword id="KW-0808">Transferase</keyword>
<gene>
    <name evidence="1" type="primary">lpxB</name>
    <name type="ordered locus">APP7_0007</name>
</gene>
<organism>
    <name type="scientific">Actinobacillus pleuropneumoniae serotype 7 (strain AP76)</name>
    <dbReference type="NCBI Taxonomy" id="537457"/>
    <lineage>
        <taxon>Bacteria</taxon>
        <taxon>Pseudomonadati</taxon>
        <taxon>Pseudomonadota</taxon>
        <taxon>Gammaproteobacteria</taxon>
        <taxon>Pasteurellales</taxon>
        <taxon>Pasteurellaceae</taxon>
        <taxon>Actinobacillus</taxon>
    </lineage>
</organism>
<proteinExistence type="inferred from homology"/>